<reference key="1">
    <citation type="journal article" date="2010" name="J. Proteome Res.">
        <title>Molecular diversification of peptide toxins from the tarantula Haplopelma hainanum (Ornithoctonus hainana) venom based on transcriptomic, peptidomic, and genomic analyses.</title>
        <authorList>
            <person name="Tang X."/>
            <person name="Zhang Y."/>
            <person name="Hu W."/>
            <person name="Xu D."/>
            <person name="Tao H."/>
            <person name="Yang X."/>
            <person name="Li Y."/>
            <person name="Jiang L."/>
            <person name="Liang S."/>
        </authorList>
    </citation>
    <scope>NUCLEOTIDE SEQUENCE [LARGE SCALE MRNA]</scope>
    <source>
        <tissue>Venom gland</tissue>
    </source>
</reference>
<accession>D2Y2E1</accession>
<organism>
    <name type="scientific">Cyriopagopus hainanus</name>
    <name type="common">Chinese bird spider</name>
    <name type="synonym">Haplopelma hainanum</name>
    <dbReference type="NCBI Taxonomy" id="209901"/>
    <lineage>
        <taxon>Eukaryota</taxon>
        <taxon>Metazoa</taxon>
        <taxon>Ecdysozoa</taxon>
        <taxon>Arthropoda</taxon>
        <taxon>Chelicerata</taxon>
        <taxon>Arachnida</taxon>
        <taxon>Araneae</taxon>
        <taxon>Mygalomorphae</taxon>
        <taxon>Theraphosidae</taxon>
        <taxon>Haplopelma</taxon>
    </lineage>
</organism>
<comment type="subcellular location">
    <subcellularLocation>
        <location evidence="1">Secreted</location>
    </subcellularLocation>
</comment>
<comment type="tissue specificity">
    <text>Expressed by the venom gland.</text>
</comment>
<comment type="similarity">
    <text evidence="4">Belongs to the AVIT (prokineticin) family.</text>
</comment>
<protein>
    <recommendedName>
        <fullName>U8-theraphotoxin-Hhn1c 1</fullName>
        <shortName>U8-TRTX-Hhn1c 1</shortName>
    </recommendedName>
    <alternativeName>
        <fullName evidence="5">Hainantoxin-XIV-3</fullName>
        <shortName evidence="5">HNTX-XIV-3</shortName>
    </alternativeName>
</protein>
<keyword id="KW-1015">Disulfide bond</keyword>
<keyword id="KW-0964">Secreted</keyword>
<keyword id="KW-0732">Signal</keyword>
<keyword id="KW-0800">Toxin</keyword>
<sequence>MKVVLIVCLVWVMAMMELVSCECWSQADCSDGHCCAGSSFSKNCRPYGGDGEQCEPRNKYEVYSTGCPCEENLMCSVINRCQSA</sequence>
<feature type="signal peptide" evidence="3">
    <location>
        <begin position="1"/>
        <end position="21"/>
    </location>
</feature>
<feature type="chain" id="PRO_0000400849" description="U8-theraphotoxin-Hhn1c 1">
    <location>
        <begin position="22"/>
        <end position="84"/>
    </location>
</feature>
<feature type="disulfide bond" evidence="2">
    <location>
        <begin position="23"/>
        <end position="35"/>
    </location>
</feature>
<feature type="disulfide bond" evidence="2">
    <location>
        <begin position="29"/>
        <end position="44"/>
    </location>
</feature>
<feature type="disulfide bond" evidence="2">
    <location>
        <begin position="34"/>
        <end position="67"/>
    </location>
</feature>
<feature type="disulfide bond" evidence="2">
    <location>
        <begin position="54"/>
        <end position="75"/>
    </location>
</feature>
<feature type="disulfide bond" evidence="2">
    <location>
        <begin position="69"/>
        <end position="81"/>
    </location>
</feature>
<name>H14C1_CYRHA</name>
<evidence type="ECO:0000250" key="1"/>
<evidence type="ECO:0000250" key="2">
    <source>
        <dbReference type="UniProtKB" id="Q9PW66"/>
    </source>
</evidence>
<evidence type="ECO:0000255" key="3"/>
<evidence type="ECO:0000305" key="4"/>
<evidence type="ECO:0000312" key="5">
    <source>
        <dbReference type="EMBL" id="ADB56834.1"/>
    </source>
</evidence>
<proteinExistence type="evidence at transcript level"/>
<dbReference type="EMBL" id="GU293018">
    <property type="protein sequence ID" value="ADB56834.1"/>
    <property type="molecule type" value="mRNA"/>
</dbReference>
<dbReference type="SMR" id="D2Y2E1"/>
<dbReference type="ArachnoServer" id="AS001663">
    <property type="toxin name" value="U8-theraphotoxin-Hhn1c"/>
</dbReference>
<dbReference type="GO" id="GO:0005576">
    <property type="term" value="C:extracellular region"/>
    <property type="evidence" value="ECO:0007669"/>
    <property type="project" value="UniProtKB-SubCell"/>
</dbReference>
<dbReference type="GO" id="GO:0090729">
    <property type="term" value="F:toxin activity"/>
    <property type="evidence" value="ECO:0007669"/>
    <property type="project" value="UniProtKB-KW"/>
</dbReference>
<dbReference type="Gene3D" id="2.10.80.10">
    <property type="entry name" value="Lipase, subunit A"/>
    <property type="match status" value="1"/>
</dbReference>
<dbReference type="InterPro" id="IPR023569">
    <property type="entry name" value="Prokineticin_domain"/>
</dbReference>
<dbReference type="Pfam" id="PF06607">
    <property type="entry name" value="Prokineticin"/>
    <property type="match status" value="1"/>
</dbReference>